<proteinExistence type="evidence at transcript level"/>
<name>THUM3_BOVIN</name>
<comment type="function">
    <text evidence="1">Catalytic subunit of the THUMPD3-TRM112 methyltransferase complex, that specifically mediates the S-adenosyl-L-methionine-dependent N(2)-methylation of guanosine nucleotide at position 6 (m2G6) in tRNAs. This is one of the major tRNA (guanine-N(2))-methyltransferases. Also catalyzes the S-adenosyl-L-methionine-dependent N(2)-methylation of guanosine nucleotide at position 7 of tRNA(Trp).</text>
</comment>
<comment type="catalytic activity">
    <reaction evidence="1">
        <text>guanosine(6) in tRNA + S-adenosyl-L-methionine = N(2)-methylguanosine(6) in tRNA + S-adenosyl-L-homocysteine + H(+)</text>
        <dbReference type="Rhea" id="RHEA:51116"/>
        <dbReference type="Rhea" id="RHEA-COMP:12888"/>
        <dbReference type="Rhea" id="RHEA-COMP:12889"/>
        <dbReference type="ChEBI" id="CHEBI:15378"/>
        <dbReference type="ChEBI" id="CHEBI:57856"/>
        <dbReference type="ChEBI" id="CHEBI:59789"/>
        <dbReference type="ChEBI" id="CHEBI:74269"/>
        <dbReference type="ChEBI" id="CHEBI:74481"/>
        <dbReference type="EC" id="2.1.1.256"/>
    </reaction>
</comment>
<comment type="catalytic activity">
    <reaction evidence="1">
        <text>guanosine(7) in tRNA + S-adenosyl-L-methionine = N(2)-methylguanosine(7) in tRNA + S-adenosyl-L-homocysteine + H(+)</text>
        <dbReference type="Rhea" id="RHEA:83419"/>
        <dbReference type="Rhea" id="RHEA-COMP:20126"/>
        <dbReference type="Rhea" id="RHEA-COMP:20127"/>
        <dbReference type="ChEBI" id="CHEBI:15378"/>
        <dbReference type="ChEBI" id="CHEBI:57856"/>
        <dbReference type="ChEBI" id="CHEBI:59789"/>
        <dbReference type="ChEBI" id="CHEBI:74269"/>
        <dbReference type="ChEBI" id="CHEBI:74481"/>
    </reaction>
    <physiologicalReaction direction="left-to-right" evidence="1">
        <dbReference type="Rhea" id="RHEA:83420"/>
    </physiologicalReaction>
</comment>
<comment type="subunit">
    <text evidence="1">Part of the heterodimeric THUMPD3-TRM112 methyltransferase complex; this complex forms an active tRNA methyltransferase, where TRMT112 acts as an activator of the catalytic subunit THUMPD3.</text>
</comment>
<comment type="subcellular location">
    <subcellularLocation>
        <location evidence="1">Cytoplasm</location>
    </subcellularLocation>
</comment>
<comment type="similarity">
    <text evidence="4">Belongs to the methyltransferase superfamily.</text>
</comment>
<feature type="chain" id="PRO_0000259768" description="tRNA (guanine(6)-N(2))-methyltransferase THUMP3">
    <location>
        <begin position="1"/>
        <end position="506"/>
    </location>
</feature>
<feature type="domain" description="THUMP" evidence="2">
    <location>
        <begin position="170"/>
        <end position="286"/>
    </location>
</feature>
<feature type="region of interest" description="Disordered" evidence="3">
    <location>
        <begin position="144"/>
        <end position="172"/>
    </location>
</feature>
<feature type="compositionally biased region" description="Basic and acidic residues" evidence="3">
    <location>
        <begin position="157"/>
        <end position="172"/>
    </location>
</feature>
<feature type="sequence conflict" description="In Ref. 2; ABF57353." evidence="4" ref="2">
    <original>T</original>
    <variation>S</variation>
    <location>
        <position position="79"/>
    </location>
</feature>
<accession>Q2T9W2</accession>
<accession>Q1JPF6</accession>
<protein>
    <recommendedName>
        <fullName evidence="1">tRNA (guanine(6)-N(2))-methyltransferase THUMP3</fullName>
        <ecNumber evidence="1">2.1.1.256</ecNumber>
    </recommendedName>
    <alternativeName>
        <fullName evidence="1">THUMP domain-containing protein 3</fullName>
    </alternativeName>
    <alternativeName>
        <fullName evidence="1">tRNA(Trp) (guanine(7)-N(2))-methyltransferase THUMP3</fullName>
        <ecNumber evidence="1">2.1.1.-</ecNumber>
    </alternativeName>
</protein>
<dbReference type="EC" id="2.1.1.256" evidence="1"/>
<dbReference type="EC" id="2.1.1.-" evidence="1"/>
<dbReference type="EMBL" id="BC111239">
    <property type="protein sequence ID" value="AAI11240.1"/>
    <property type="molecule type" value="mRNA"/>
</dbReference>
<dbReference type="EMBL" id="BT025397">
    <property type="protein sequence ID" value="ABF57353.1"/>
    <property type="molecule type" value="mRNA"/>
</dbReference>
<dbReference type="RefSeq" id="NP_001033151.1">
    <property type="nucleotide sequence ID" value="NM_001038062.1"/>
</dbReference>
<dbReference type="SMR" id="Q2T9W2"/>
<dbReference type="FunCoup" id="Q2T9W2">
    <property type="interactions" value="3232"/>
</dbReference>
<dbReference type="STRING" id="9913.ENSBTAP00000004047"/>
<dbReference type="PaxDb" id="9913-ENSBTAP00000004047"/>
<dbReference type="GeneID" id="508940"/>
<dbReference type="KEGG" id="bta:508940"/>
<dbReference type="CTD" id="25917"/>
<dbReference type="eggNOG" id="ENOG502QSE5">
    <property type="taxonomic scope" value="Eukaryota"/>
</dbReference>
<dbReference type="InParanoid" id="Q2T9W2"/>
<dbReference type="OrthoDB" id="47730at2759"/>
<dbReference type="Proteomes" id="UP000009136">
    <property type="component" value="Unplaced"/>
</dbReference>
<dbReference type="GO" id="GO:0005737">
    <property type="term" value="C:cytoplasm"/>
    <property type="evidence" value="ECO:0007669"/>
    <property type="project" value="UniProtKB-SubCell"/>
</dbReference>
<dbReference type="GO" id="GO:0016423">
    <property type="term" value="F:tRNA (guanine) methyltransferase activity"/>
    <property type="evidence" value="ECO:0000318"/>
    <property type="project" value="GO_Central"/>
</dbReference>
<dbReference type="GO" id="GO:0000049">
    <property type="term" value="F:tRNA binding"/>
    <property type="evidence" value="ECO:0007669"/>
    <property type="project" value="UniProtKB-KW"/>
</dbReference>
<dbReference type="GO" id="GO:0030488">
    <property type="term" value="P:tRNA methylation"/>
    <property type="evidence" value="ECO:0000318"/>
    <property type="project" value="GO_Central"/>
</dbReference>
<dbReference type="CDD" id="cd11715">
    <property type="entry name" value="THUMP_AdoMetMT"/>
    <property type="match status" value="1"/>
</dbReference>
<dbReference type="FunFam" id="3.40.50.150:FF:000073">
    <property type="entry name" value="THUMP domain containing 3"/>
    <property type="match status" value="1"/>
</dbReference>
<dbReference type="FunFam" id="3.30.2130.30:FF:000004">
    <property type="entry name" value="THUMP domain-containing protein 3 isoform X1"/>
    <property type="match status" value="1"/>
</dbReference>
<dbReference type="FunFam" id="3.30.2130.30:FF:000007">
    <property type="entry name" value="THUMP domain-containing protein 3 isoform X1"/>
    <property type="match status" value="1"/>
</dbReference>
<dbReference type="Gene3D" id="3.30.2130.30">
    <property type="match status" value="1"/>
</dbReference>
<dbReference type="Gene3D" id="3.40.50.150">
    <property type="entry name" value="Vaccinia Virus protein VP39"/>
    <property type="match status" value="1"/>
</dbReference>
<dbReference type="InterPro" id="IPR000241">
    <property type="entry name" value="RlmKL-like_Mtase"/>
</dbReference>
<dbReference type="InterPro" id="IPR053943">
    <property type="entry name" value="RlmKL-like_Mtase_CS"/>
</dbReference>
<dbReference type="InterPro" id="IPR029063">
    <property type="entry name" value="SAM-dependent_MTases_sf"/>
</dbReference>
<dbReference type="InterPro" id="IPR004114">
    <property type="entry name" value="THUMP_dom"/>
</dbReference>
<dbReference type="PANTHER" id="PTHR14911">
    <property type="entry name" value="THUMP DOMAIN-CONTAINING"/>
    <property type="match status" value="1"/>
</dbReference>
<dbReference type="PANTHER" id="PTHR14911:SF13">
    <property type="entry name" value="TRNA (GUANINE(6)-N2)-METHYLTRANSFERASE THUMP3"/>
    <property type="match status" value="1"/>
</dbReference>
<dbReference type="Pfam" id="PF02926">
    <property type="entry name" value="THUMP"/>
    <property type="match status" value="1"/>
</dbReference>
<dbReference type="Pfam" id="PF01170">
    <property type="entry name" value="UPF0020"/>
    <property type="match status" value="1"/>
</dbReference>
<dbReference type="SMART" id="SM00981">
    <property type="entry name" value="THUMP"/>
    <property type="match status" value="1"/>
</dbReference>
<dbReference type="SUPFAM" id="SSF53335">
    <property type="entry name" value="S-adenosyl-L-methionine-dependent methyltransferases"/>
    <property type="match status" value="1"/>
</dbReference>
<dbReference type="SUPFAM" id="SSF143437">
    <property type="entry name" value="THUMP domain-like"/>
    <property type="match status" value="1"/>
</dbReference>
<dbReference type="PROSITE" id="PS51165">
    <property type="entry name" value="THUMP"/>
    <property type="match status" value="1"/>
</dbReference>
<dbReference type="PROSITE" id="PS01261">
    <property type="entry name" value="UPF0020"/>
    <property type="match status" value="1"/>
</dbReference>
<gene>
    <name evidence="1" type="primary">THUMPD3</name>
</gene>
<keyword id="KW-0963">Cytoplasm</keyword>
<keyword id="KW-0489">Methyltransferase</keyword>
<keyword id="KW-1185">Reference proteome</keyword>
<keyword id="KW-0694">RNA-binding</keyword>
<keyword id="KW-0949">S-adenosyl-L-methionine</keyword>
<keyword id="KW-0808">Transferase</keyword>
<keyword id="KW-0819">tRNA processing</keyword>
<keyword id="KW-0820">tRNA-binding</keyword>
<reference key="1">
    <citation type="submission" date="2005-12" db="EMBL/GenBank/DDBJ databases">
        <authorList>
            <consortium name="NIH - Mammalian Gene Collection (MGC) project"/>
        </authorList>
    </citation>
    <scope>NUCLEOTIDE SEQUENCE [LARGE SCALE MRNA]</scope>
    <source>
        <strain>Crossbred X Angus</strain>
        <tissue>Liver</tissue>
    </source>
</reference>
<reference key="2">
    <citation type="journal article" date="2005" name="BMC Genomics">
        <title>Characterization of 954 bovine full-CDS cDNA sequences.</title>
        <authorList>
            <person name="Harhay G.P."/>
            <person name="Sonstegard T.S."/>
            <person name="Keele J.W."/>
            <person name="Heaton M.P."/>
            <person name="Clawson M.L."/>
            <person name="Snelling W.M."/>
            <person name="Wiedmann R.T."/>
            <person name="Van Tassell C.P."/>
            <person name="Smith T.P.L."/>
        </authorList>
    </citation>
    <scope>NUCLEOTIDE SEQUENCE [LARGE SCALE MRNA] OF 1-214</scope>
</reference>
<evidence type="ECO:0000250" key="1">
    <source>
        <dbReference type="UniProtKB" id="Q9BV44"/>
    </source>
</evidence>
<evidence type="ECO:0000255" key="2">
    <source>
        <dbReference type="PROSITE-ProRule" id="PRU00529"/>
    </source>
</evidence>
<evidence type="ECO:0000256" key="3">
    <source>
        <dbReference type="SAM" id="MobiDB-lite"/>
    </source>
</evidence>
<evidence type="ECO:0000305" key="4"/>
<sequence length="506" mass="56674">MSDVQEATNQLLDVNLCENQMSIQVTESGPRSESEHLQVTIGATVPTGFEQTAADEVREKLGSSCKISKDRGKIYFDITVDSLAQVHCLRSVDNLFVVVQEFKDYQFKETKEEVLKDFEELAGKLPWSDPLKIWKINTCFKKKKTKRRKLNPNSSKQKIDNGRGDTTVEKDVKKELTNSVSDSQISDYYENPAIKEQVSTLIGDGLTSCKDETEENSKEEADPEVLKFRVTCNRAGEKHCFSSNEAARDFGGAVQDYFKWKADMTNFDVEVLLNIHDNEVVVGIALTEESLHRRNITHFGPTTLRSTLAYGMLRLCAPQPTDIIVDPMCGTGAIPIEGATEWSNCYHIAGDNNPLAVNRAANNISSLLTKIQVKEGKLPLGLPIDTIQWDICNLPLRTGSVDIIVTDMPFGKRMGSKKRNWNLYPACLREMSRVCRPGTGRAVLLTQDKKCFAKALSGMGHLWRKVHTVWVNIGGLHAAVYLLKRTPQSFVHPSEEDGERCPCTQR</sequence>
<organism>
    <name type="scientific">Bos taurus</name>
    <name type="common">Bovine</name>
    <dbReference type="NCBI Taxonomy" id="9913"/>
    <lineage>
        <taxon>Eukaryota</taxon>
        <taxon>Metazoa</taxon>
        <taxon>Chordata</taxon>
        <taxon>Craniata</taxon>
        <taxon>Vertebrata</taxon>
        <taxon>Euteleostomi</taxon>
        <taxon>Mammalia</taxon>
        <taxon>Eutheria</taxon>
        <taxon>Laurasiatheria</taxon>
        <taxon>Artiodactyla</taxon>
        <taxon>Ruminantia</taxon>
        <taxon>Pecora</taxon>
        <taxon>Bovidae</taxon>
        <taxon>Bovinae</taxon>
        <taxon>Bos</taxon>
    </lineage>
</organism>